<protein>
    <recommendedName>
        <fullName>Cyclin-L1-1</fullName>
        <shortName>CycL1;1</shortName>
    </recommendedName>
</protein>
<gene>
    <name type="primary">CYCL1-1</name>
    <name type="ordered locus">Os01g0377500</name>
    <name type="ordered locus">LOC_Os01g27940</name>
    <name evidence="3" type="ORF">OsJ_01844</name>
    <name type="ORF">P0416G11.14</name>
</gene>
<name>CCL11_ORYSJ</name>
<reference key="1">
    <citation type="journal article" date="2002" name="Nature">
        <title>The genome sequence and structure of rice chromosome 1.</title>
        <authorList>
            <person name="Sasaki T."/>
            <person name="Matsumoto T."/>
            <person name="Yamamoto K."/>
            <person name="Sakata K."/>
            <person name="Baba T."/>
            <person name="Katayose Y."/>
            <person name="Wu J."/>
            <person name="Niimura Y."/>
            <person name="Cheng Z."/>
            <person name="Nagamura Y."/>
            <person name="Antonio B.A."/>
            <person name="Kanamori H."/>
            <person name="Hosokawa S."/>
            <person name="Masukawa M."/>
            <person name="Arikawa K."/>
            <person name="Chiden Y."/>
            <person name="Hayashi M."/>
            <person name="Okamoto M."/>
            <person name="Ando T."/>
            <person name="Aoki H."/>
            <person name="Arita K."/>
            <person name="Hamada M."/>
            <person name="Harada C."/>
            <person name="Hijishita S."/>
            <person name="Honda M."/>
            <person name="Ichikawa Y."/>
            <person name="Idonuma A."/>
            <person name="Iijima M."/>
            <person name="Ikeda M."/>
            <person name="Ikeno M."/>
            <person name="Ito S."/>
            <person name="Ito T."/>
            <person name="Ito Y."/>
            <person name="Ito Y."/>
            <person name="Iwabuchi A."/>
            <person name="Kamiya K."/>
            <person name="Karasawa W."/>
            <person name="Katagiri S."/>
            <person name="Kikuta A."/>
            <person name="Kobayashi N."/>
            <person name="Kono I."/>
            <person name="Machita K."/>
            <person name="Maehara T."/>
            <person name="Mizuno H."/>
            <person name="Mizubayashi T."/>
            <person name="Mukai Y."/>
            <person name="Nagasaki H."/>
            <person name="Nakashima M."/>
            <person name="Nakama Y."/>
            <person name="Nakamichi Y."/>
            <person name="Nakamura M."/>
            <person name="Namiki N."/>
            <person name="Negishi M."/>
            <person name="Ohta I."/>
            <person name="Ono N."/>
            <person name="Saji S."/>
            <person name="Sakai K."/>
            <person name="Shibata M."/>
            <person name="Shimokawa T."/>
            <person name="Shomura A."/>
            <person name="Song J."/>
            <person name="Takazaki Y."/>
            <person name="Terasawa K."/>
            <person name="Tsuji K."/>
            <person name="Waki K."/>
            <person name="Yamagata H."/>
            <person name="Yamane H."/>
            <person name="Yoshiki S."/>
            <person name="Yoshihara R."/>
            <person name="Yukawa K."/>
            <person name="Zhong H."/>
            <person name="Iwama H."/>
            <person name="Endo T."/>
            <person name="Ito H."/>
            <person name="Hahn J.H."/>
            <person name="Kim H.-I."/>
            <person name="Eun M.-Y."/>
            <person name="Yano M."/>
            <person name="Jiang J."/>
            <person name="Gojobori T."/>
        </authorList>
    </citation>
    <scope>NUCLEOTIDE SEQUENCE [LARGE SCALE GENOMIC DNA]</scope>
    <source>
        <strain>cv. Nipponbare</strain>
    </source>
</reference>
<reference key="2">
    <citation type="journal article" date="2005" name="Nature">
        <title>The map-based sequence of the rice genome.</title>
        <authorList>
            <consortium name="International rice genome sequencing project (IRGSP)"/>
        </authorList>
    </citation>
    <scope>NUCLEOTIDE SEQUENCE [LARGE SCALE GENOMIC DNA]</scope>
    <source>
        <strain>cv. Nipponbare</strain>
    </source>
</reference>
<reference key="3">
    <citation type="journal article" date="2008" name="Nucleic Acids Res.">
        <title>The rice annotation project database (RAP-DB): 2008 update.</title>
        <authorList>
            <consortium name="The rice annotation project (RAP)"/>
        </authorList>
    </citation>
    <scope>GENOME REANNOTATION</scope>
    <source>
        <strain>cv. Nipponbare</strain>
    </source>
</reference>
<reference key="4">
    <citation type="journal article" date="2013" name="Rice">
        <title>Improvement of the Oryza sativa Nipponbare reference genome using next generation sequence and optical map data.</title>
        <authorList>
            <person name="Kawahara Y."/>
            <person name="de la Bastide M."/>
            <person name="Hamilton J.P."/>
            <person name="Kanamori H."/>
            <person name="McCombie W.R."/>
            <person name="Ouyang S."/>
            <person name="Schwartz D.C."/>
            <person name="Tanaka T."/>
            <person name="Wu J."/>
            <person name="Zhou S."/>
            <person name="Childs K.L."/>
            <person name="Davidson R.M."/>
            <person name="Lin H."/>
            <person name="Quesada-Ocampo L."/>
            <person name="Vaillancourt B."/>
            <person name="Sakai H."/>
            <person name="Lee S.S."/>
            <person name="Kim J."/>
            <person name="Numa H."/>
            <person name="Itoh T."/>
            <person name="Buell C.R."/>
            <person name="Matsumoto T."/>
        </authorList>
    </citation>
    <scope>GENOME REANNOTATION</scope>
    <source>
        <strain>cv. Nipponbare</strain>
    </source>
</reference>
<reference key="5">
    <citation type="journal article" date="2005" name="PLoS Biol.">
        <title>The genomes of Oryza sativa: a history of duplications.</title>
        <authorList>
            <person name="Yu J."/>
            <person name="Wang J."/>
            <person name="Lin W."/>
            <person name="Li S."/>
            <person name="Li H."/>
            <person name="Zhou J."/>
            <person name="Ni P."/>
            <person name="Dong W."/>
            <person name="Hu S."/>
            <person name="Zeng C."/>
            <person name="Zhang J."/>
            <person name="Zhang Y."/>
            <person name="Li R."/>
            <person name="Xu Z."/>
            <person name="Li S."/>
            <person name="Li X."/>
            <person name="Zheng H."/>
            <person name="Cong L."/>
            <person name="Lin L."/>
            <person name="Yin J."/>
            <person name="Geng J."/>
            <person name="Li G."/>
            <person name="Shi J."/>
            <person name="Liu J."/>
            <person name="Lv H."/>
            <person name="Li J."/>
            <person name="Wang J."/>
            <person name="Deng Y."/>
            <person name="Ran L."/>
            <person name="Shi X."/>
            <person name="Wang X."/>
            <person name="Wu Q."/>
            <person name="Li C."/>
            <person name="Ren X."/>
            <person name="Wang J."/>
            <person name="Wang X."/>
            <person name="Li D."/>
            <person name="Liu D."/>
            <person name="Zhang X."/>
            <person name="Ji Z."/>
            <person name="Zhao W."/>
            <person name="Sun Y."/>
            <person name="Zhang Z."/>
            <person name="Bao J."/>
            <person name="Han Y."/>
            <person name="Dong L."/>
            <person name="Ji J."/>
            <person name="Chen P."/>
            <person name="Wu S."/>
            <person name="Liu J."/>
            <person name="Xiao Y."/>
            <person name="Bu D."/>
            <person name="Tan J."/>
            <person name="Yang L."/>
            <person name="Ye C."/>
            <person name="Zhang J."/>
            <person name="Xu J."/>
            <person name="Zhou Y."/>
            <person name="Yu Y."/>
            <person name="Zhang B."/>
            <person name="Zhuang S."/>
            <person name="Wei H."/>
            <person name="Liu B."/>
            <person name="Lei M."/>
            <person name="Yu H."/>
            <person name="Li Y."/>
            <person name="Xu H."/>
            <person name="Wei S."/>
            <person name="He X."/>
            <person name="Fang L."/>
            <person name="Zhang Z."/>
            <person name="Zhang Y."/>
            <person name="Huang X."/>
            <person name="Su Z."/>
            <person name="Tong W."/>
            <person name="Li J."/>
            <person name="Tong Z."/>
            <person name="Li S."/>
            <person name="Ye J."/>
            <person name="Wang L."/>
            <person name="Fang L."/>
            <person name="Lei T."/>
            <person name="Chen C.-S."/>
            <person name="Chen H.-C."/>
            <person name="Xu Z."/>
            <person name="Li H."/>
            <person name="Huang H."/>
            <person name="Zhang F."/>
            <person name="Xu H."/>
            <person name="Li N."/>
            <person name="Zhao C."/>
            <person name="Li S."/>
            <person name="Dong L."/>
            <person name="Huang Y."/>
            <person name="Li L."/>
            <person name="Xi Y."/>
            <person name="Qi Q."/>
            <person name="Li W."/>
            <person name="Zhang B."/>
            <person name="Hu W."/>
            <person name="Zhang Y."/>
            <person name="Tian X."/>
            <person name="Jiao Y."/>
            <person name="Liang X."/>
            <person name="Jin J."/>
            <person name="Gao L."/>
            <person name="Zheng W."/>
            <person name="Hao B."/>
            <person name="Liu S.-M."/>
            <person name="Wang W."/>
            <person name="Yuan L."/>
            <person name="Cao M."/>
            <person name="McDermott J."/>
            <person name="Samudrala R."/>
            <person name="Wang J."/>
            <person name="Wong G.K.-S."/>
            <person name="Yang H."/>
        </authorList>
    </citation>
    <scope>NUCLEOTIDE SEQUENCE [LARGE SCALE GENOMIC DNA]</scope>
    <source>
        <strain>cv. Nipponbare</strain>
    </source>
</reference>
<reference key="6">
    <citation type="journal article" date="2003" name="Science">
        <title>Collection, mapping, and annotation of over 28,000 cDNA clones from japonica rice.</title>
        <authorList>
            <consortium name="The rice full-length cDNA consortium"/>
        </authorList>
    </citation>
    <scope>NUCLEOTIDE SEQUENCE [LARGE SCALE MRNA]</scope>
    <source>
        <strain>cv. Nipponbare</strain>
    </source>
</reference>
<reference key="7">
    <citation type="journal article" date="2006" name="Mol. Genet. Genomics">
        <title>Genome-wide analysis of cyclin family in rice (Oryza sativa L.).</title>
        <authorList>
            <person name="La H."/>
            <person name="Li J."/>
            <person name="Ji Z."/>
            <person name="Cheng Y."/>
            <person name="Li X."/>
            <person name="Jiang S."/>
            <person name="Venkatesh P.N."/>
            <person name="Ramachandran S."/>
        </authorList>
    </citation>
    <scope>GENE FAMILY</scope>
    <scope>NOMENCLATURE</scope>
</reference>
<accession>Q9AS36</accession>
<accession>B9EWV3</accession>
<comment type="similarity">
    <text evidence="2">Belongs to the cyclin family. Cyclin L subfamily.</text>
</comment>
<dbReference type="EMBL" id="AP002968">
    <property type="protein sequence ID" value="BAB39257.1"/>
    <property type="molecule type" value="Genomic_DNA"/>
</dbReference>
<dbReference type="EMBL" id="AP008207">
    <property type="protein sequence ID" value="BAF04997.1"/>
    <property type="molecule type" value="Genomic_DNA"/>
</dbReference>
<dbReference type="EMBL" id="AP014957">
    <property type="protein sequence ID" value="BAS72212.1"/>
    <property type="molecule type" value="Genomic_DNA"/>
</dbReference>
<dbReference type="EMBL" id="CM000138">
    <property type="protein sequence ID" value="EEE54609.1"/>
    <property type="molecule type" value="Genomic_DNA"/>
</dbReference>
<dbReference type="EMBL" id="AK069233">
    <property type="status" value="NOT_ANNOTATED_CDS"/>
    <property type="molecule type" value="mRNA"/>
</dbReference>
<dbReference type="RefSeq" id="XP_015622140.1">
    <property type="nucleotide sequence ID" value="XM_015766654.1"/>
</dbReference>
<dbReference type="SMR" id="Q9AS36"/>
<dbReference type="FunCoup" id="Q9AS36">
    <property type="interactions" value="2927"/>
</dbReference>
<dbReference type="STRING" id="39947.Q9AS36"/>
<dbReference type="PaxDb" id="39947-Q9AS36"/>
<dbReference type="EnsemblPlants" id="Os01t0377500-01">
    <property type="protein sequence ID" value="Os01t0377500-01"/>
    <property type="gene ID" value="Os01g0377500"/>
</dbReference>
<dbReference type="Gramene" id="Os01t0377500-01">
    <property type="protein sequence ID" value="Os01t0377500-01"/>
    <property type="gene ID" value="Os01g0377500"/>
</dbReference>
<dbReference type="KEGG" id="dosa:Os01g0377500"/>
<dbReference type="eggNOG" id="KOG0835">
    <property type="taxonomic scope" value="Eukaryota"/>
</dbReference>
<dbReference type="HOGENOM" id="CLU_022000_1_0_1"/>
<dbReference type="InParanoid" id="Q9AS36"/>
<dbReference type="OMA" id="GHKHRDG"/>
<dbReference type="OrthoDB" id="10264655at2759"/>
<dbReference type="Proteomes" id="UP000000763">
    <property type="component" value="Chromosome 1"/>
</dbReference>
<dbReference type="Proteomes" id="UP000007752">
    <property type="component" value="Chromosome 1"/>
</dbReference>
<dbReference type="Proteomes" id="UP000059680">
    <property type="component" value="Chromosome 1"/>
</dbReference>
<dbReference type="GO" id="GO:0005634">
    <property type="term" value="C:nucleus"/>
    <property type="evidence" value="ECO:0000318"/>
    <property type="project" value="GO_Central"/>
</dbReference>
<dbReference type="GO" id="GO:0016538">
    <property type="term" value="F:cyclin-dependent protein serine/threonine kinase regulator activity"/>
    <property type="evidence" value="ECO:0000318"/>
    <property type="project" value="GO_Central"/>
</dbReference>
<dbReference type="GO" id="GO:0051301">
    <property type="term" value="P:cell division"/>
    <property type="evidence" value="ECO:0007669"/>
    <property type="project" value="UniProtKB-KW"/>
</dbReference>
<dbReference type="GO" id="GO:0006357">
    <property type="term" value="P:regulation of transcription by RNA polymerase II"/>
    <property type="evidence" value="ECO:0007669"/>
    <property type="project" value="InterPro"/>
</dbReference>
<dbReference type="GO" id="GO:0009651">
    <property type="term" value="P:response to salt stress"/>
    <property type="evidence" value="ECO:0007669"/>
    <property type="project" value="EnsemblPlants"/>
</dbReference>
<dbReference type="CDD" id="cd20594">
    <property type="entry name" value="CYCLIN_AcCycL_rpt2"/>
    <property type="match status" value="1"/>
</dbReference>
<dbReference type="FunFam" id="1.10.472.10:FF:000068">
    <property type="entry name" value="Cyclin-L1-1 isoform A"/>
    <property type="match status" value="1"/>
</dbReference>
<dbReference type="FunFam" id="1.10.472.10:FF:000031">
    <property type="entry name" value="cyclin-L1-1-like isoform X1"/>
    <property type="match status" value="1"/>
</dbReference>
<dbReference type="Gene3D" id="1.10.472.10">
    <property type="entry name" value="Cyclin-like"/>
    <property type="match status" value="2"/>
</dbReference>
<dbReference type="InterPro" id="IPR013763">
    <property type="entry name" value="Cyclin-like_dom"/>
</dbReference>
<dbReference type="InterPro" id="IPR036915">
    <property type="entry name" value="Cyclin-like_sf"/>
</dbReference>
<dbReference type="InterPro" id="IPR043198">
    <property type="entry name" value="Cyclin/Ssn8"/>
</dbReference>
<dbReference type="InterPro" id="IPR006671">
    <property type="entry name" value="Cyclin_N"/>
</dbReference>
<dbReference type="PANTHER" id="PTHR10026">
    <property type="entry name" value="CYCLIN"/>
    <property type="match status" value="1"/>
</dbReference>
<dbReference type="Pfam" id="PF00134">
    <property type="entry name" value="Cyclin_N"/>
    <property type="match status" value="1"/>
</dbReference>
<dbReference type="PIRSF" id="PIRSF036580">
    <property type="entry name" value="Cyclin_L"/>
    <property type="match status" value="1"/>
</dbReference>
<dbReference type="SMART" id="SM00385">
    <property type="entry name" value="CYCLIN"/>
    <property type="match status" value="2"/>
</dbReference>
<dbReference type="SUPFAM" id="SSF47954">
    <property type="entry name" value="Cyclin-like"/>
    <property type="match status" value="2"/>
</dbReference>
<evidence type="ECO:0000256" key="1">
    <source>
        <dbReference type="SAM" id="MobiDB-lite"/>
    </source>
</evidence>
<evidence type="ECO:0000305" key="2"/>
<evidence type="ECO:0000312" key="3">
    <source>
        <dbReference type="EMBL" id="EEE54609.1"/>
    </source>
</evidence>
<feature type="chain" id="PRO_0000287052" description="Cyclin-L1-1">
    <location>
        <begin position="1"/>
        <end position="427"/>
    </location>
</feature>
<feature type="region of interest" description="Disordered" evidence="1">
    <location>
        <begin position="258"/>
        <end position="427"/>
    </location>
</feature>
<feature type="compositionally biased region" description="Polar residues" evidence="1">
    <location>
        <begin position="263"/>
        <end position="276"/>
    </location>
</feature>
<feature type="compositionally biased region" description="Basic and acidic residues" evidence="1">
    <location>
        <begin position="289"/>
        <end position="311"/>
    </location>
</feature>
<feature type="compositionally biased region" description="Basic and acidic residues" evidence="1">
    <location>
        <begin position="328"/>
        <end position="382"/>
    </location>
</feature>
<feature type="compositionally biased region" description="Basic and acidic residues" evidence="1">
    <location>
        <begin position="390"/>
        <end position="400"/>
    </location>
</feature>
<feature type="compositionally biased region" description="Basic and acidic residues" evidence="1">
    <location>
        <begin position="407"/>
        <end position="421"/>
    </location>
</feature>
<feature type="sequence conflict" description="In Ref. 6; AK069233." evidence="2" ref="6">
    <original>K</original>
    <variation>N</variation>
    <location>
        <position position="328"/>
    </location>
</feature>
<feature type="sequence conflict" description="In Ref. 6; AK069233." evidence="2" ref="6">
    <original>R</original>
    <variation>Q</variation>
    <location>
        <position position="384"/>
    </location>
</feature>
<sequence length="427" mass="49127">MIYTAIDTFYLTDEQLRDSPSRKDGIDEATETALRVYGCDLIQESGILLKLPQAVMATAQVLFHRFYCKKSFVRFSVKRVAASCVWLAGKLEESPRRSKHIIIVFHRMECRRENVPIEHLDVFSKKYSDLKHDLVRTERHLLKEMGFICHVEHPHKFISNYLATLEAPELTQEAWNLANDSLRTTLCVRFKSEVVACGVVYAAARRHGVPLPEDPPWWNVFDADEAGIQEVCRVLAHLYSLPKSQYIQVYKDNDSFTHRRTSDTNASKESPATTVASDKGTPVPSSSSQEKDALIKAGSDKVKEKGDDDGKTLPSEPNGKEGPAVNLKSEKSESNVDRSRERERDRSRGRDRDSRGRDSDRDSKGRDSDRERERDREADRDRQRRHHSKDRSSGYSDKEKSRHRSSRDRGDHYSSHSSRDKDRHRRQ</sequence>
<proteinExistence type="evidence at transcript level"/>
<keyword id="KW-0131">Cell cycle</keyword>
<keyword id="KW-0132">Cell division</keyword>
<keyword id="KW-0195">Cyclin</keyword>
<keyword id="KW-1185">Reference proteome</keyword>
<organism>
    <name type="scientific">Oryza sativa subsp. japonica</name>
    <name type="common">Rice</name>
    <dbReference type="NCBI Taxonomy" id="39947"/>
    <lineage>
        <taxon>Eukaryota</taxon>
        <taxon>Viridiplantae</taxon>
        <taxon>Streptophyta</taxon>
        <taxon>Embryophyta</taxon>
        <taxon>Tracheophyta</taxon>
        <taxon>Spermatophyta</taxon>
        <taxon>Magnoliopsida</taxon>
        <taxon>Liliopsida</taxon>
        <taxon>Poales</taxon>
        <taxon>Poaceae</taxon>
        <taxon>BOP clade</taxon>
        <taxon>Oryzoideae</taxon>
        <taxon>Oryzeae</taxon>
        <taxon>Oryzinae</taxon>
        <taxon>Oryza</taxon>
        <taxon>Oryza sativa</taxon>
    </lineage>
</organism>